<protein>
    <recommendedName>
        <fullName evidence="10">Mad-like protein 1</fullName>
    </recommendedName>
</protein>
<sequence length="281" mass="30738">MEQQLNLGHLLTAARLLDIGALDISSLDLGALTSTSSSPGSSSPAMFDLSNESELRSLFCGKLKVDKKQSSCASNASTSSQPYCSSPPARKSSKHSRTAHNELEKTRRANLRGCLETLKMLVPCVSDATRNTTLALLTRARDHIIELQDSNAAQMKKLNDLRDEQDELVAELAQLQADEEVAQATSQACQTLSQSRPESRASSFTSTSSRDSPCYLEYSPSSKPMDSHKPTIIDLYAEGLIPRGPITFPRPLVYPHNVFDLMNLPPTPFDVSQFLPINLQV</sequence>
<evidence type="ECO:0000255" key="1"/>
<evidence type="ECO:0000255" key="2">
    <source>
        <dbReference type="PROSITE-ProRule" id="PRU00981"/>
    </source>
</evidence>
<evidence type="ECO:0000256" key="3">
    <source>
        <dbReference type="SAM" id="MobiDB-lite"/>
    </source>
</evidence>
<evidence type="ECO:0000269" key="4">
    <source>
    </source>
</evidence>
<evidence type="ECO:0000269" key="5">
    <source>
    </source>
</evidence>
<evidence type="ECO:0000269" key="6">
    <source>
    </source>
</evidence>
<evidence type="ECO:0000269" key="7">
    <source>
    </source>
</evidence>
<evidence type="ECO:0000269" key="8">
    <source>
    </source>
</evidence>
<evidence type="ECO:0000269" key="9">
    <source>
    </source>
</evidence>
<evidence type="ECO:0000303" key="10">
    <source>
    </source>
</evidence>
<evidence type="ECO:0000305" key="11"/>
<evidence type="ECO:0000312" key="12">
    <source>
        <dbReference type="EMBL" id="AAB40927.1"/>
    </source>
</evidence>
<evidence type="ECO:0000312" key="13">
    <source>
        <dbReference type="Proteomes" id="UP000001940"/>
    </source>
</evidence>
<evidence type="ECO:0000312" key="14">
    <source>
        <dbReference type="WormBase" id="R03E9.1"/>
    </source>
</evidence>
<proteinExistence type="evidence at protein level"/>
<reference evidence="12" key="1">
    <citation type="journal article" date="1998" name="Oncogene">
        <title>The C. elegans MDL-1 and MXL-1 proteins can functionally substitute for vertebrate MAD and MAX.</title>
        <authorList>
            <person name="Yuan J."/>
            <person name="Tirabassi R.S."/>
            <person name="Bush A.B."/>
            <person name="Cole M.D."/>
        </authorList>
    </citation>
    <scope>NUCLEOTIDE SEQUENCE [MRNA]</scope>
    <scope>FUNCTION</scope>
    <scope>SUBUNIT</scope>
    <scope>DEVELOPMENTAL STAGE</scope>
    <source>
        <strain evidence="12">Bristol N2</strain>
    </source>
</reference>
<reference evidence="13" key="2">
    <citation type="journal article" date="1998" name="Science">
        <title>Genome sequence of the nematode C. elegans: a platform for investigating biology.</title>
        <authorList>
            <consortium name="The C. elegans sequencing consortium"/>
        </authorList>
    </citation>
    <scope>NUCLEOTIDE SEQUENCE [LARGE SCALE GENOMIC DNA]</scope>
    <source>
        <strain evidence="13">Bristol N2</strain>
    </source>
</reference>
<reference evidence="11" key="3">
    <citation type="journal article" date="2014" name="PLoS Genet.">
        <title>The Caenorhabditis elegans Myc-Mondo/Mad complexes integrate diverse longevity signals.</title>
        <authorList>
            <person name="Johnson D.W."/>
            <person name="Llop J.R."/>
            <person name="Farrell S.F."/>
            <person name="Yuan J."/>
            <person name="Stolzenburg L.R."/>
            <person name="Samuelson A.V."/>
        </authorList>
    </citation>
    <scope>FUNCTION</scope>
    <scope>DISRUPTION PHENOTYPE</scope>
</reference>
<reference evidence="11" key="4">
    <citation type="journal article" date="2016" name="G3 (Bethesda)">
        <title>Microsporidia Intracellular Development Relies on Myc Interaction Network Transcription Factors in the Host.</title>
        <authorList>
            <person name="Botts M.R."/>
            <person name="Cohen L.B."/>
            <person name="Probert C.S."/>
            <person name="Wu F."/>
            <person name="Troemel E.R."/>
        </authorList>
    </citation>
    <scope>FUNCTION</scope>
    <scope>SUBCELLULAR LOCATION</scope>
    <scope>TISSUE SPECIFICITY</scope>
    <scope>DEVELOPMENTAL STAGE</scope>
    <scope>DISRUPTION PHENOTYPE</scope>
</reference>
<reference evidence="11" key="5">
    <citation type="journal article" date="2016" name="Nat. Commun.">
        <title>Mondo complexes regulate TFEB via TOR inhibition to promote longevity in response to gonadal signals.</title>
        <authorList>
            <person name="Nakamura S."/>
            <person name="Karalay O."/>
            <person name="Jaeger P.S."/>
            <person name="Horikawa M."/>
            <person name="Klein C."/>
            <person name="Nakamura K."/>
            <person name="Latza C."/>
            <person name="Templer S.E."/>
            <person name="Dieterich C."/>
            <person name="Antebi A."/>
        </authorList>
    </citation>
    <scope>FUNCTION</scope>
</reference>
<reference evidence="11" key="6">
    <citation type="journal article" date="2019" name="EMBO Rep.">
        <title>TDP2 negatively regulates axon regeneration by inducing SUMOylation of an Ets transcription factor.</title>
        <authorList>
            <person name="Sakai Y."/>
            <person name="Hanafusa H."/>
            <person name="Pastuhov S.I."/>
            <person name="Shimizu T."/>
            <person name="Li C."/>
            <person name="Hisamoto N."/>
            <person name="Matsumoto K."/>
        </authorList>
    </citation>
    <scope>FUNCTION</scope>
    <scope>TISSUE SPECIFICITY</scope>
    <scope>DISRUPTION PHENOTYPE</scope>
</reference>
<reference evidence="11" key="7">
    <citation type="journal article" date="2021" name="J. Neurosci.">
        <title>Caenorhabditis elegans F-Box Protein Promotes Axon Regeneration by Inducing Degradation of the Mad Transcription Factor.</title>
        <authorList>
            <person name="Shimizu T."/>
            <person name="Pastuhov S.I."/>
            <person name="Hanafusa H."/>
            <person name="Sakai Y."/>
            <person name="Todoroki Y."/>
            <person name="Hisamoto N."/>
            <person name="Matsumoto K."/>
        </authorList>
    </citation>
    <scope>FUNCTION</scope>
    <scope>INTERACTION WITH SDZ-33</scope>
    <scope>TISSUE SPECIFICITY</scope>
    <scope>SUBCELLULAR LOCATION</scope>
    <scope>DISRUPTION PHENOTYPE</scope>
</reference>
<dbReference type="EMBL" id="U82968">
    <property type="protein sequence ID" value="AAB40927.1"/>
    <property type="molecule type" value="mRNA"/>
</dbReference>
<dbReference type="EMBL" id="BX284606">
    <property type="protein sequence ID" value="CCD72421.1"/>
    <property type="molecule type" value="Genomic_DNA"/>
</dbReference>
<dbReference type="PIR" id="T28857">
    <property type="entry name" value="T28857"/>
</dbReference>
<dbReference type="RefSeq" id="NP_509136.1">
    <property type="nucleotide sequence ID" value="NM_076735.6"/>
</dbReference>
<dbReference type="SMR" id="G5EG44"/>
<dbReference type="FunCoup" id="G5EG44">
    <property type="interactions" value="11"/>
</dbReference>
<dbReference type="IntAct" id="G5EG44">
    <property type="interactions" value="3"/>
</dbReference>
<dbReference type="STRING" id="6239.R03E9.1.1"/>
<dbReference type="PaxDb" id="6239-R03E9.1"/>
<dbReference type="EnsemblMetazoa" id="R03E9.1.1">
    <property type="protein sequence ID" value="R03E9.1.1"/>
    <property type="gene ID" value="WBGene00003163"/>
</dbReference>
<dbReference type="GeneID" id="180942"/>
<dbReference type="KEGG" id="cel:CELE_R03E9.1"/>
<dbReference type="AGR" id="WB:WBGene00003163"/>
<dbReference type="CTD" id="180942"/>
<dbReference type="WormBase" id="R03E9.1">
    <property type="protein sequence ID" value="CE04784"/>
    <property type="gene ID" value="WBGene00003163"/>
    <property type="gene designation" value="mdl-1"/>
</dbReference>
<dbReference type="eggNOG" id="KOG2483">
    <property type="taxonomic scope" value="Eukaryota"/>
</dbReference>
<dbReference type="GeneTree" id="ENSGT00940000170386"/>
<dbReference type="HOGENOM" id="CLU_984270_0_0_1"/>
<dbReference type="InParanoid" id="G5EG44"/>
<dbReference type="OMA" id="PYCIPSP"/>
<dbReference type="OrthoDB" id="5920083at2759"/>
<dbReference type="PRO" id="PR:G5EG44"/>
<dbReference type="Proteomes" id="UP000001940">
    <property type="component" value="Chromosome X"/>
</dbReference>
<dbReference type="Bgee" id="WBGene00003163">
    <property type="expression patterns" value="Expressed in larva and 3 other cell types or tissues"/>
</dbReference>
<dbReference type="GO" id="GO:0005634">
    <property type="term" value="C:nucleus"/>
    <property type="evidence" value="ECO:0000314"/>
    <property type="project" value="WormBase"/>
</dbReference>
<dbReference type="GO" id="GO:0005667">
    <property type="term" value="C:transcription regulator complex"/>
    <property type="evidence" value="ECO:0000353"/>
    <property type="project" value="WormBase"/>
</dbReference>
<dbReference type="GO" id="GO:0000981">
    <property type="term" value="F:DNA-binding transcription factor activity, RNA polymerase II-specific"/>
    <property type="evidence" value="ECO:0000318"/>
    <property type="project" value="GO_Central"/>
</dbReference>
<dbReference type="GO" id="GO:0046982">
    <property type="term" value="F:protein heterodimerization activity"/>
    <property type="evidence" value="ECO:0000353"/>
    <property type="project" value="WormBase"/>
</dbReference>
<dbReference type="GO" id="GO:0000978">
    <property type="term" value="F:RNA polymerase II cis-regulatory region sequence-specific DNA binding"/>
    <property type="evidence" value="ECO:0000318"/>
    <property type="project" value="GO_Central"/>
</dbReference>
<dbReference type="GO" id="GO:0008340">
    <property type="term" value="P:determination of adult lifespan"/>
    <property type="evidence" value="ECO:0000316"/>
    <property type="project" value="WormBase"/>
</dbReference>
<dbReference type="GO" id="GO:0045595">
    <property type="term" value="P:regulation of cell differentiation"/>
    <property type="evidence" value="ECO:0000316"/>
    <property type="project" value="WormBase"/>
</dbReference>
<dbReference type="GO" id="GO:0006357">
    <property type="term" value="P:regulation of transcription by RNA polymerase II"/>
    <property type="evidence" value="ECO:0000318"/>
    <property type="project" value="GO_Central"/>
</dbReference>
<dbReference type="CDD" id="cd11401">
    <property type="entry name" value="bHLHzip_Mad"/>
    <property type="match status" value="1"/>
</dbReference>
<dbReference type="Gene3D" id="4.10.280.10">
    <property type="entry name" value="Helix-loop-helix DNA-binding domain"/>
    <property type="match status" value="1"/>
</dbReference>
<dbReference type="InterPro" id="IPR011598">
    <property type="entry name" value="bHLH_dom"/>
</dbReference>
<dbReference type="InterPro" id="IPR036638">
    <property type="entry name" value="HLH_DNA-bd_sf"/>
</dbReference>
<dbReference type="PANTHER" id="PTHR11969:SF54">
    <property type="entry name" value="MAD-LIKE PROTEIN 1"/>
    <property type="match status" value="1"/>
</dbReference>
<dbReference type="PANTHER" id="PTHR11969">
    <property type="entry name" value="MAX DIMERIZATION, MAD"/>
    <property type="match status" value="1"/>
</dbReference>
<dbReference type="Pfam" id="PF00010">
    <property type="entry name" value="HLH"/>
    <property type="match status" value="1"/>
</dbReference>
<dbReference type="SMART" id="SM00353">
    <property type="entry name" value="HLH"/>
    <property type="match status" value="1"/>
</dbReference>
<dbReference type="SUPFAM" id="SSF47459">
    <property type="entry name" value="HLH, helix-loop-helix DNA-binding domain"/>
    <property type="match status" value="1"/>
</dbReference>
<dbReference type="PROSITE" id="PS50888">
    <property type="entry name" value="BHLH"/>
    <property type="match status" value="1"/>
</dbReference>
<feature type="chain" id="PRO_0000451996" description="Mad-like protein 1">
    <location>
        <begin position="1"/>
        <end position="281"/>
    </location>
</feature>
<feature type="domain" description="bHLH" evidence="2">
    <location>
        <begin position="95"/>
        <end position="147"/>
    </location>
</feature>
<feature type="region of interest" description="Disordered" evidence="3">
    <location>
        <begin position="71"/>
        <end position="105"/>
    </location>
</feature>
<feature type="region of interest" description="Basic motif" evidence="2">
    <location>
        <begin position="95"/>
        <end position="108"/>
    </location>
</feature>
<feature type="region of interest" description="Helix-loop-helix motif" evidence="2">
    <location>
        <begin position="109"/>
        <end position="147"/>
    </location>
</feature>
<feature type="region of interest" description="Disordered" evidence="3">
    <location>
        <begin position="189"/>
        <end position="213"/>
    </location>
</feature>
<feature type="coiled-coil region" evidence="1">
    <location>
        <begin position="144"/>
        <end position="185"/>
    </location>
</feature>
<feature type="compositionally biased region" description="Low complexity" evidence="3">
    <location>
        <begin position="71"/>
        <end position="80"/>
    </location>
</feature>
<feature type="compositionally biased region" description="Low complexity" evidence="3">
    <location>
        <begin position="200"/>
        <end position="212"/>
    </location>
</feature>
<keyword id="KW-0175">Coiled coil</keyword>
<keyword id="KW-0238">DNA-binding</keyword>
<keyword id="KW-0539">Nucleus</keyword>
<keyword id="KW-1185">Reference proteome</keyword>
<keyword id="KW-0804">Transcription</keyword>
<keyword id="KW-0805">Transcription regulation</keyword>
<keyword id="KW-0832">Ubl conjugation</keyword>
<name>MDL1_CAEEL</name>
<comment type="function">
    <text evidence="4 5 6 7 8 9">Transcriptional regulator which binds to the E box motif 5'-CACGTG-3', when in a heterodimeric complex with mxl-1 (PubMed:9764821). Involved in the control of lifespan in response to dietary restriction, the decline in protein homeostasis associated with normal aging, germline signaling and may overlap with the insulin-like signaling pathway (PubMed:24699255, PubMed:27001890). Plays a role in autophagy (PubMed:27001890). Involved in promoting infection by the microsporidian pathogen N.parisii, possibly together with transcription factors pha-4 and zip-10 (PubMed:27402359). In response to neuronal injury, mdl-1 is targeted by sdz-33 for ubiquitin-mediated degradation, probably thereby reducing levels of mdl-1-mxl-1 heterodimers, allowing free mxl-1 to form complexes with tdpt-1 and thus inhibiting tdpt-1-dependent sumoylation of ets-4 (PubMed:31393064, PubMed:33514673).</text>
</comment>
<comment type="subunit">
    <text evidence="9">Forms heterodimer with mxl-1 in the presence and absence of DNA.</text>
</comment>
<comment type="interaction">
    <interactant intactId="EBI-1182971">
        <id>G5EG44</id>
    </interactant>
    <interactant intactId="EBI-1182982">
        <id>G5EEH5</id>
        <label>mxl-1</label>
    </interactant>
    <organismsDiffer>false</organismsDiffer>
    <experiments>5</experiments>
</comment>
<comment type="subcellular location">
    <subcellularLocation>
        <location evidence="2 6 8">Nucleus</location>
    </subcellularLocation>
</comment>
<comment type="tissue specificity">
    <text evidence="6 7 8">Expressed in intestinal cells in adults (PubMed:27402359). Expressed in D-type motor neuron cell bodies (PubMed:31393064, PubMed:33514673).</text>
</comment>
<comment type="developmental stage">
    <text evidence="6 9">Expressed weakly in larval stage L1 and strongly throughout the remainder of larval development (PubMed:9764821). Expressed in larval posterior intestinal cells and neurons (PubMed:27402359, PubMed:9764821).</text>
</comment>
<comment type="PTM">
    <text evidence="8">Ubiquitinated.</text>
</comment>
<comment type="disruption phenotype">
    <text evidence="4 6 7 8">Does not suppress axon regeneration defect in mxl-1 mutant background (PubMed:31393064). Suppresses the axon regeneration defect in sdz-33 mutant background (PubMed:33514673). RNAi-mediated knockdown increases lifespan, which is abolished on an mxl-2 or mml-1 mutant background, or by simultaneous RNAi-mediated knockdown of daf-16 or pha-4 (PubMed:24699255). RNAi-mediated knockdown causes delayed onset of polyglutamine-mediated paralysis (PubMed:24699255). RNAi-mediated knockdown reduces spore levels of the microsporidian pathogen N.parisii during infection, further reduced on an mxl-2 mutant background (PubMed:27402359).</text>
</comment>
<gene>
    <name evidence="14" type="primary">mdl-1</name>
    <name evidence="14" type="ORF">R03E9.1</name>
</gene>
<organism evidence="13">
    <name type="scientific">Caenorhabditis elegans</name>
    <dbReference type="NCBI Taxonomy" id="6239"/>
    <lineage>
        <taxon>Eukaryota</taxon>
        <taxon>Metazoa</taxon>
        <taxon>Ecdysozoa</taxon>
        <taxon>Nematoda</taxon>
        <taxon>Chromadorea</taxon>
        <taxon>Rhabditida</taxon>
        <taxon>Rhabditina</taxon>
        <taxon>Rhabditomorpha</taxon>
        <taxon>Rhabditoidea</taxon>
        <taxon>Rhabditidae</taxon>
        <taxon>Peloderinae</taxon>
        <taxon>Caenorhabditis</taxon>
    </lineage>
</organism>
<accession>G5EG44</accession>